<gene>
    <name type="primary">NIP3-1</name>
    <name type="ordered locus">Os10g0513200</name>
    <name type="ordered locus">LOC_Os10g36924</name>
    <name type="ORF">OsJ_030877</name>
    <name type="ORF">OSJNBa0026L12.23</name>
    <name type="ORF">OSJNBa0026L12.32</name>
</gene>
<organism>
    <name type="scientific">Oryza sativa subsp. japonica</name>
    <name type="common">Rice</name>
    <dbReference type="NCBI Taxonomy" id="39947"/>
    <lineage>
        <taxon>Eukaryota</taxon>
        <taxon>Viridiplantae</taxon>
        <taxon>Streptophyta</taxon>
        <taxon>Embryophyta</taxon>
        <taxon>Tracheophyta</taxon>
        <taxon>Spermatophyta</taxon>
        <taxon>Magnoliopsida</taxon>
        <taxon>Liliopsida</taxon>
        <taxon>Poales</taxon>
        <taxon>Poaceae</taxon>
        <taxon>BOP clade</taxon>
        <taxon>Oryzoideae</taxon>
        <taxon>Oryzeae</taxon>
        <taxon>Oryzinae</taxon>
        <taxon>Oryza</taxon>
        <taxon>Oryza sativa</taxon>
    </lineage>
</organism>
<comment type="function">
    <text evidence="1">Aquaporins facilitate the transport of water and small neutral solutes across cell membranes.</text>
</comment>
<comment type="subcellular location">
    <subcellularLocation>
        <location evidence="5">Membrane</location>
        <topology evidence="5">Multi-pass membrane protein</topology>
    </subcellularLocation>
</comment>
<comment type="tissue specificity">
    <text evidence="4">Expressed in roots and leaves.</text>
</comment>
<comment type="domain">
    <text>Aquaporins contain two tandem repeats each containing three membrane-spanning domains and a pore-forming loop with the signature motif Asn-Pro-Ala (NPA).</text>
</comment>
<comment type="similarity">
    <text evidence="5">Belongs to the MIP/aquaporin (TC 1.A.8) family. NIP (TC 1.A.8.12) subfamily.</text>
</comment>
<comment type="sequence caution" evidence="5">
    <conflict type="erroneous gene model prediction">
        <sequence resource="EMBL-CDS" id="AAG13499"/>
    </conflict>
</comment>
<comment type="sequence caution" evidence="5">
    <conflict type="erroneous gene model prediction">
        <sequence resource="EMBL-CDS" id="AAG13515"/>
    </conflict>
</comment>
<comment type="sequence caution" evidence="5">
    <conflict type="erroneous gene model prediction">
        <sequence resource="EMBL-CDS" id="BAF26962"/>
    </conflict>
</comment>
<comment type="sequence caution" evidence="5">
    <conflict type="erroneous initiation">
        <sequence resource="EMBL-CDS" id="EAZ16668"/>
    </conflict>
    <text>Truncated N-terminus.</text>
</comment>
<accession>Q0IWF3</accession>
<accession>A0A0P0XW70</accession>
<accession>A3C6F5</accession>
<accession>Q109F1</accession>
<accession>Q9FW73</accession>
<accession>Q9FW74</accession>
<reference key="1">
    <citation type="journal article" date="2003" name="Science">
        <title>In-depth view of structure, activity, and evolution of rice chromosome 10.</title>
        <authorList>
            <person name="Yu Y."/>
            <person name="Rambo T."/>
            <person name="Currie J."/>
            <person name="Saski C."/>
            <person name="Kim H.-R."/>
            <person name="Collura K."/>
            <person name="Thompson S."/>
            <person name="Simmons J."/>
            <person name="Yang T.-J."/>
            <person name="Nah G."/>
            <person name="Patel A.J."/>
            <person name="Thurmond S."/>
            <person name="Henry D."/>
            <person name="Oates R."/>
            <person name="Palmer M."/>
            <person name="Pries G."/>
            <person name="Gibson J."/>
            <person name="Anderson H."/>
            <person name="Paradkar M."/>
            <person name="Crane L."/>
            <person name="Dale J."/>
            <person name="Carver M.B."/>
            <person name="Wood T."/>
            <person name="Frisch D."/>
            <person name="Engler F."/>
            <person name="Soderlund C."/>
            <person name="Palmer L.E."/>
            <person name="Teytelman L."/>
            <person name="Nascimento L."/>
            <person name="De la Bastide M."/>
            <person name="Spiegel L."/>
            <person name="Ware D."/>
            <person name="O'Shaughnessy A."/>
            <person name="Dike S."/>
            <person name="Dedhia N."/>
            <person name="Preston R."/>
            <person name="Huang E."/>
            <person name="Ferraro K."/>
            <person name="Kuit K."/>
            <person name="Miller B."/>
            <person name="Zutavern T."/>
            <person name="Katzenberger F."/>
            <person name="Muller S."/>
            <person name="Balija V."/>
            <person name="Martienssen R.A."/>
            <person name="Stein L."/>
            <person name="Minx P."/>
            <person name="Johnson D."/>
            <person name="Cordum H."/>
            <person name="Mardis E."/>
            <person name="Cheng Z."/>
            <person name="Jiang J."/>
            <person name="Wilson R."/>
            <person name="McCombie W.R."/>
            <person name="Wing R.A."/>
            <person name="Yuan Q."/>
            <person name="Ouyang S."/>
            <person name="Liu J."/>
            <person name="Jones K.M."/>
            <person name="Gansberger K."/>
            <person name="Moffat K."/>
            <person name="Hill J."/>
            <person name="Tsitrin T."/>
            <person name="Overton L."/>
            <person name="Bera J."/>
            <person name="Kim M."/>
            <person name="Jin S."/>
            <person name="Tallon L."/>
            <person name="Ciecko A."/>
            <person name="Pai G."/>
            <person name="Van Aken S."/>
            <person name="Utterback T."/>
            <person name="Reidmuller S."/>
            <person name="Bormann J."/>
            <person name="Feldblyum T."/>
            <person name="Hsiao J."/>
            <person name="Zismann V."/>
            <person name="Blunt S."/>
            <person name="de Vazeille A.R."/>
            <person name="Shaffer T."/>
            <person name="Koo H."/>
            <person name="Suh B."/>
            <person name="Yang Q."/>
            <person name="Haas B."/>
            <person name="Peterson J."/>
            <person name="Pertea M."/>
            <person name="Volfovsky N."/>
            <person name="Wortman J."/>
            <person name="White O."/>
            <person name="Salzberg S.L."/>
            <person name="Fraser C.M."/>
            <person name="Buell C.R."/>
            <person name="Messing J."/>
            <person name="Song R."/>
            <person name="Fuks G."/>
            <person name="Llaca V."/>
            <person name="Kovchak S."/>
            <person name="Young S."/>
            <person name="Bowers J.E."/>
            <person name="Paterson A.H."/>
            <person name="Johns M.A."/>
            <person name="Mao L."/>
            <person name="Pan H."/>
            <person name="Dean R.A."/>
        </authorList>
    </citation>
    <scope>NUCLEOTIDE SEQUENCE [LARGE SCALE GENOMIC DNA]</scope>
    <source>
        <strain>cv. Nipponbare</strain>
    </source>
</reference>
<reference key="2">
    <citation type="journal article" date="2005" name="Nature">
        <title>The map-based sequence of the rice genome.</title>
        <authorList>
            <consortium name="International rice genome sequencing project (IRGSP)"/>
        </authorList>
    </citation>
    <scope>NUCLEOTIDE SEQUENCE [LARGE SCALE GENOMIC DNA]</scope>
    <source>
        <strain>cv. Nipponbare</strain>
    </source>
</reference>
<reference key="3">
    <citation type="journal article" date="2008" name="Nucleic Acids Res.">
        <title>The rice annotation project database (RAP-DB): 2008 update.</title>
        <authorList>
            <consortium name="The rice annotation project (RAP)"/>
        </authorList>
    </citation>
    <scope>GENOME REANNOTATION</scope>
    <source>
        <strain>cv. Nipponbare</strain>
    </source>
</reference>
<reference key="4">
    <citation type="journal article" date="2013" name="Rice">
        <title>Improvement of the Oryza sativa Nipponbare reference genome using next generation sequence and optical map data.</title>
        <authorList>
            <person name="Kawahara Y."/>
            <person name="de la Bastide M."/>
            <person name="Hamilton J.P."/>
            <person name="Kanamori H."/>
            <person name="McCombie W.R."/>
            <person name="Ouyang S."/>
            <person name="Schwartz D.C."/>
            <person name="Tanaka T."/>
            <person name="Wu J."/>
            <person name="Zhou S."/>
            <person name="Childs K.L."/>
            <person name="Davidson R.M."/>
            <person name="Lin H."/>
            <person name="Quesada-Ocampo L."/>
            <person name="Vaillancourt B."/>
            <person name="Sakai H."/>
            <person name="Lee S.S."/>
            <person name="Kim J."/>
            <person name="Numa H."/>
            <person name="Itoh T."/>
            <person name="Buell C.R."/>
            <person name="Matsumoto T."/>
        </authorList>
    </citation>
    <scope>GENOME REANNOTATION</scope>
    <source>
        <strain>cv. Nipponbare</strain>
    </source>
</reference>
<reference key="5">
    <citation type="journal article" date="2005" name="PLoS Biol.">
        <title>The genomes of Oryza sativa: a history of duplications.</title>
        <authorList>
            <person name="Yu J."/>
            <person name="Wang J."/>
            <person name="Lin W."/>
            <person name="Li S."/>
            <person name="Li H."/>
            <person name="Zhou J."/>
            <person name="Ni P."/>
            <person name="Dong W."/>
            <person name="Hu S."/>
            <person name="Zeng C."/>
            <person name="Zhang J."/>
            <person name="Zhang Y."/>
            <person name="Li R."/>
            <person name="Xu Z."/>
            <person name="Li S."/>
            <person name="Li X."/>
            <person name="Zheng H."/>
            <person name="Cong L."/>
            <person name="Lin L."/>
            <person name="Yin J."/>
            <person name="Geng J."/>
            <person name="Li G."/>
            <person name="Shi J."/>
            <person name="Liu J."/>
            <person name="Lv H."/>
            <person name="Li J."/>
            <person name="Wang J."/>
            <person name="Deng Y."/>
            <person name="Ran L."/>
            <person name="Shi X."/>
            <person name="Wang X."/>
            <person name="Wu Q."/>
            <person name="Li C."/>
            <person name="Ren X."/>
            <person name="Wang J."/>
            <person name="Wang X."/>
            <person name="Li D."/>
            <person name="Liu D."/>
            <person name="Zhang X."/>
            <person name="Ji Z."/>
            <person name="Zhao W."/>
            <person name="Sun Y."/>
            <person name="Zhang Z."/>
            <person name="Bao J."/>
            <person name="Han Y."/>
            <person name="Dong L."/>
            <person name="Ji J."/>
            <person name="Chen P."/>
            <person name="Wu S."/>
            <person name="Liu J."/>
            <person name="Xiao Y."/>
            <person name="Bu D."/>
            <person name="Tan J."/>
            <person name="Yang L."/>
            <person name="Ye C."/>
            <person name="Zhang J."/>
            <person name="Xu J."/>
            <person name="Zhou Y."/>
            <person name="Yu Y."/>
            <person name="Zhang B."/>
            <person name="Zhuang S."/>
            <person name="Wei H."/>
            <person name="Liu B."/>
            <person name="Lei M."/>
            <person name="Yu H."/>
            <person name="Li Y."/>
            <person name="Xu H."/>
            <person name="Wei S."/>
            <person name="He X."/>
            <person name="Fang L."/>
            <person name="Zhang Z."/>
            <person name="Zhang Y."/>
            <person name="Huang X."/>
            <person name="Su Z."/>
            <person name="Tong W."/>
            <person name="Li J."/>
            <person name="Tong Z."/>
            <person name="Li S."/>
            <person name="Ye J."/>
            <person name="Wang L."/>
            <person name="Fang L."/>
            <person name="Lei T."/>
            <person name="Chen C.-S."/>
            <person name="Chen H.-C."/>
            <person name="Xu Z."/>
            <person name="Li H."/>
            <person name="Huang H."/>
            <person name="Zhang F."/>
            <person name="Xu H."/>
            <person name="Li N."/>
            <person name="Zhao C."/>
            <person name="Li S."/>
            <person name="Dong L."/>
            <person name="Huang Y."/>
            <person name="Li L."/>
            <person name="Xi Y."/>
            <person name="Qi Q."/>
            <person name="Li W."/>
            <person name="Zhang B."/>
            <person name="Hu W."/>
            <person name="Zhang Y."/>
            <person name="Tian X."/>
            <person name="Jiao Y."/>
            <person name="Liang X."/>
            <person name="Jin J."/>
            <person name="Gao L."/>
            <person name="Zheng W."/>
            <person name="Hao B."/>
            <person name="Liu S.-M."/>
            <person name="Wang W."/>
            <person name="Yuan L."/>
            <person name="Cao M."/>
            <person name="McDermott J."/>
            <person name="Samudrala R."/>
            <person name="Wang J."/>
            <person name="Wong G.K.-S."/>
            <person name="Yang H."/>
        </authorList>
    </citation>
    <scope>NUCLEOTIDE SEQUENCE [LARGE SCALE GENOMIC DNA]</scope>
    <source>
        <strain>cv. Nipponbare</strain>
    </source>
</reference>
<reference key="6">
    <citation type="journal article" date="2005" name="Plant Cell Physiol.">
        <title>Identification of 33 rice aquaporin genes and analysis of their expression and function.</title>
        <authorList>
            <person name="Sakurai J."/>
            <person name="Ishikawa F."/>
            <person name="Yamaguchi T."/>
            <person name="Uemura M."/>
            <person name="Maeshima M."/>
        </authorList>
    </citation>
    <scope>NOMENCLATURE</scope>
    <scope>TISSUE SPECIFICITY</scope>
</reference>
<sequence length="311" mass="31844">MEMAAPNGGGAAGMSSPVNGASAPATPGTPAPLFAGPRVDSLSYERKSMPRCKCLPAAVAEAWAPSAHGCVVEIPAPDVSLTRKLGAEFVGTFILIFFATAAPIVNQKYGGAISPFGNAACAGLAVTTIILSTGHISGAHLNPSLTIAFAALRHFPWLQVPAYVAVQVLGSICAGFALKGVFHPFLSGGVTVPDPTISTAQAFFTEFIITFNLLFVVTAVATDTRAVGELAGIAVGAAVTLNILIAGPTTGGSMNPVRTLGPAVAAGNYRQLWIYLIAPTLGAVAGAGVYTAVKLRDENGETPRPQRSFRR</sequence>
<protein>
    <recommendedName>
        <fullName>Aquaporin NIP3-1</fullName>
    </recommendedName>
    <alternativeName>
        <fullName>NOD26-like intrinsic protein 3-1</fullName>
    </alternativeName>
    <alternativeName>
        <fullName>OsNIP3;1</fullName>
    </alternativeName>
</protein>
<dbReference type="EMBL" id="AC068924">
    <property type="protein sequence ID" value="AAG13499.1"/>
    <property type="status" value="ALT_SEQ"/>
    <property type="molecule type" value="Genomic_DNA"/>
</dbReference>
<dbReference type="EMBL" id="AC068924">
    <property type="protein sequence ID" value="AAG13515.1"/>
    <property type="status" value="ALT_SEQ"/>
    <property type="molecule type" value="Genomic_DNA"/>
</dbReference>
<dbReference type="EMBL" id="DP000086">
    <property type="protein sequence ID" value="ABG66185.1"/>
    <property type="molecule type" value="Genomic_DNA"/>
</dbReference>
<dbReference type="EMBL" id="AP008216">
    <property type="protein sequence ID" value="BAF26962.2"/>
    <property type="status" value="ALT_SEQ"/>
    <property type="molecule type" value="Genomic_DNA"/>
</dbReference>
<dbReference type="EMBL" id="AP014966">
    <property type="protein sequence ID" value="BAT11637.1"/>
    <property type="molecule type" value="Genomic_DNA"/>
</dbReference>
<dbReference type="EMBL" id="CM000147">
    <property type="protein sequence ID" value="EAZ16668.1"/>
    <property type="status" value="ALT_INIT"/>
    <property type="molecule type" value="Genomic_DNA"/>
</dbReference>
<dbReference type="RefSeq" id="XP_015614995.1">
    <property type="nucleotide sequence ID" value="XM_015759509.1"/>
</dbReference>
<dbReference type="SMR" id="Q0IWF3"/>
<dbReference type="FunCoup" id="Q0IWF3">
    <property type="interactions" value="28"/>
</dbReference>
<dbReference type="STRING" id="39947.Q0IWF3"/>
<dbReference type="PaxDb" id="39947-Q0IWF3"/>
<dbReference type="EnsemblPlants" id="Os10t0513200-01">
    <property type="protein sequence ID" value="Os10t0513200-01"/>
    <property type="gene ID" value="Os10g0513200"/>
</dbReference>
<dbReference type="Gramene" id="Os10t0513200-01">
    <property type="protein sequence ID" value="Os10t0513200-01"/>
    <property type="gene ID" value="Os10g0513200"/>
</dbReference>
<dbReference type="KEGG" id="dosa:Os10g0513200"/>
<dbReference type="eggNOG" id="KOG0223">
    <property type="taxonomic scope" value="Eukaryota"/>
</dbReference>
<dbReference type="InParanoid" id="Q0IWF3"/>
<dbReference type="OrthoDB" id="3222at2759"/>
<dbReference type="PlantReactome" id="R-OSA-9618218">
    <property type="pathway name" value="Arsenic uptake and detoxification"/>
</dbReference>
<dbReference type="Proteomes" id="UP000000763">
    <property type="component" value="Chromosome 10"/>
</dbReference>
<dbReference type="Proteomes" id="UP000007752">
    <property type="component" value="Chromosome 10"/>
</dbReference>
<dbReference type="Proteomes" id="UP000059680">
    <property type="component" value="Chromosome 10"/>
</dbReference>
<dbReference type="GO" id="GO:0016020">
    <property type="term" value="C:membrane"/>
    <property type="evidence" value="ECO:0007669"/>
    <property type="project" value="UniProtKB-SubCell"/>
</dbReference>
<dbReference type="GO" id="GO:0015267">
    <property type="term" value="F:channel activity"/>
    <property type="evidence" value="ECO:0007669"/>
    <property type="project" value="InterPro"/>
</dbReference>
<dbReference type="CDD" id="cd00333">
    <property type="entry name" value="MIP"/>
    <property type="match status" value="1"/>
</dbReference>
<dbReference type="FunFam" id="1.20.1080.10:FF:000013">
    <property type="entry name" value="Aquaporin NIP2-1"/>
    <property type="match status" value="1"/>
</dbReference>
<dbReference type="Gene3D" id="1.20.1080.10">
    <property type="entry name" value="Glycerol uptake facilitator protein"/>
    <property type="match status" value="1"/>
</dbReference>
<dbReference type="InterPro" id="IPR023271">
    <property type="entry name" value="Aquaporin-like"/>
</dbReference>
<dbReference type="InterPro" id="IPR034294">
    <property type="entry name" value="Aquaporin_transptr"/>
</dbReference>
<dbReference type="InterPro" id="IPR000425">
    <property type="entry name" value="MIP"/>
</dbReference>
<dbReference type="InterPro" id="IPR022357">
    <property type="entry name" value="MIP_CS"/>
</dbReference>
<dbReference type="PANTHER" id="PTHR45724">
    <property type="entry name" value="AQUAPORIN NIP2-1"/>
    <property type="match status" value="1"/>
</dbReference>
<dbReference type="PANTHER" id="PTHR45724:SF11">
    <property type="entry name" value="AQUAPORIN NIP5-1-RELATED"/>
    <property type="match status" value="1"/>
</dbReference>
<dbReference type="Pfam" id="PF00230">
    <property type="entry name" value="MIP"/>
    <property type="match status" value="1"/>
</dbReference>
<dbReference type="PRINTS" id="PR00783">
    <property type="entry name" value="MINTRINSICP"/>
</dbReference>
<dbReference type="SUPFAM" id="SSF81338">
    <property type="entry name" value="Aquaporin-like"/>
    <property type="match status" value="1"/>
</dbReference>
<dbReference type="PROSITE" id="PS00221">
    <property type="entry name" value="MIP"/>
    <property type="match status" value="1"/>
</dbReference>
<proteinExistence type="evidence at transcript level"/>
<name>NIP31_ORYSJ</name>
<feature type="chain" id="PRO_0000286035" description="Aquaporin NIP3-1">
    <location>
        <begin position="1"/>
        <end position="311"/>
    </location>
</feature>
<feature type="transmembrane region" description="Helical; Name=1" evidence="2">
    <location>
        <begin position="85"/>
        <end position="105"/>
    </location>
</feature>
<feature type="transmembrane region" description="Helical; Name=2" evidence="2">
    <location>
        <begin position="111"/>
        <end position="131"/>
    </location>
</feature>
<feature type="transmembrane region" description="Helical; Name=3" evidence="2">
    <location>
        <begin position="158"/>
        <end position="178"/>
    </location>
</feature>
<feature type="transmembrane region" description="Helical; Name=4" evidence="2">
    <location>
        <begin position="202"/>
        <end position="222"/>
    </location>
</feature>
<feature type="transmembrane region" description="Helical; Name=5" evidence="2">
    <location>
        <begin position="226"/>
        <end position="246"/>
    </location>
</feature>
<feature type="transmembrane region" description="Helical; Name=6" evidence="2">
    <location>
        <begin position="273"/>
        <end position="293"/>
    </location>
</feature>
<feature type="region of interest" description="Disordered" evidence="3">
    <location>
        <begin position="1"/>
        <end position="34"/>
    </location>
</feature>
<feature type="short sequence motif" description="NPA 1">
    <location>
        <begin position="142"/>
        <end position="144"/>
    </location>
</feature>
<feature type="short sequence motif" description="NPA 2">
    <location>
        <begin position="255"/>
        <end position="257"/>
    </location>
</feature>
<feature type="compositionally biased region" description="Low complexity" evidence="3">
    <location>
        <begin position="20"/>
        <end position="34"/>
    </location>
</feature>
<feature type="sequence conflict" description="In Ref. 5; EAZ16668." evidence="5" ref="5">
    <original>A</original>
    <variation>P</variation>
    <location>
        <position position="11"/>
    </location>
</feature>
<keyword id="KW-0472">Membrane</keyword>
<keyword id="KW-1185">Reference proteome</keyword>
<keyword id="KW-0677">Repeat</keyword>
<keyword id="KW-0812">Transmembrane</keyword>
<keyword id="KW-1133">Transmembrane helix</keyword>
<keyword id="KW-0813">Transport</keyword>
<evidence type="ECO:0000250" key="1"/>
<evidence type="ECO:0000255" key="2"/>
<evidence type="ECO:0000256" key="3">
    <source>
        <dbReference type="SAM" id="MobiDB-lite"/>
    </source>
</evidence>
<evidence type="ECO:0000269" key="4">
    <source>
    </source>
</evidence>
<evidence type="ECO:0000305" key="5"/>